<evidence type="ECO:0000255" key="1">
    <source>
        <dbReference type="HAMAP-Rule" id="MF_01278"/>
    </source>
</evidence>
<organism>
    <name type="scientific">Methanococcus maripaludis (strain C7 / ATCC BAA-1331)</name>
    <dbReference type="NCBI Taxonomy" id="426368"/>
    <lineage>
        <taxon>Archaea</taxon>
        <taxon>Methanobacteriati</taxon>
        <taxon>Methanobacteriota</taxon>
        <taxon>Methanomada group</taxon>
        <taxon>Methanococci</taxon>
        <taxon>Methanococcales</taxon>
        <taxon>Methanococcaceae</taxon>
        <taxon>Methanococcus</taxon>
    </lineage>
</organism>
<comment type="function">
    <text evidence="1">Catalyzes the attachment of serine to tRNA(Ser). Is also able to aminoacylate tRNA(Sec) with serine, to form the misacylated tRNA L-seryl-tRNA(Sec), which will be further converted into selenocysteinyl-tRNA(Sec).</text>
</comment>
<comment type="catalytic activity">
    <reaction evidence="1">
        <text>tRNA(Ser) + L-serine + ATP = L-seryl-tRNA(Ser) + AMP + diphosphate + H(+)</text>
        <dbReference type="Rhea" id="RHEA:12292"/>
        <dbReference type="Rhea" id="RHEA-COMP:9669"/>
        <dbReference type="Rhea" id="RHEA-COMP:9703"/>
        <dbReference type="ChEBI" id="CHEBI:15378"/>
        <dbReference type="ChEBI" id="CHEBI:30616"/>
        <dbReference type="ChEBI" id="CHEBI:33019"/>
        <dbReference type="ChEBI" id="CHEBI:33384"/>
        <dbReference type="ChEBI" id="CHEBI:78442"/>
        <dbReference type="ChEBI" id="CHEBI:78533"/>
        <dbReference type="ChEBI" id="CHEBI:456215"/>
        <dbReference type="EC" id="6.1.1.11"/>
    </reaction>
</comment>
<comment type="catalytic activity">
    <reaction evidence="1">
        <text>tRNA(Sec) + L-serine + ATP = L-seryl-tRNA(Sec) + AMP + diphosphate + H(+)</text>
        <dbReference type="Rhea" id="RHEA:42580"/>
        <dbReference type="Rhea" id="RHEA-COMP:9742"/>
        <dbReference type="Rhea" id="RHEA-COMP:10128"/>
        <dbReference type="ChEBI" id="CHEBI:15378"/>
        <dbReference type="ChEBI" id="CHEBI:30616"/>
        <dbReference type="ChEBI" id="CHEBI:33019"/>
        <dbReference type="ChEBI" id="CHEBI:33384"/>
        <dbReference type="ChEBI" id="CHEBI:78442"/>
        <dbReference type="ChEBI" id="CHEBI:78533"/>
        <dbReference type="ChEBI" id="CHEBI:456215"/>
        <dbReference type="EC" id="6.1.1.11"/>
    </reaction>
</comment>
<comment type="cofactor">
    <cofactor evidence="1">
        <name>Zn(2+)</name>
        <dbReference type="ChEBI" id="CHEBI:29105"/>
    </cofactor>
    <text evidence="1">Binds 1 Zn(2+) ion per subunit. This ion is coordinated with 2 cysteines, 1 glutamate and a water molecule that dissociates from the zinc ion to allow the coordination of the amino group of the serine substrate, which is essential for catalysis.</text>
</comment>
<comment type="pathway">
    <text evidence="1">Aminoacyl-tRNA biosynthesis; selenocysteinyl-tRNA(Sec) biosynthesis; L-seryl-tRNA(Sec) from L-serine and tRNA(Sec): step 1/1.</text>
</comment>
<comment type="subunit">
    <text evidence="1">Homodimer.</text>
</comment>
<comment type="subcellular location">
    <subcellularLocation>
        <location evidence="1">Cytoplasm</location>
    </subcellularLocation>
</comment>
<comment type="domain">
    <text evidence="1">Consists of two distinct domains, a catalytic core and a N-terminal extension that is presumably involved in tRNA binding.</text>
</comment>
<comment type="similarity">
    <text evidence="1">Belongs to the class-II aminoacyl-tRNA synthetase family. Type-2 seryl-tRNA synthetase subfamily.</text>
</comment>
<name>SYS2_METM7</name>
<proteinExistence type="inferred from homology"/>
<accession>A6VFH1</accession>
<protein>
    <recommendedName>
        <fullName evidence="1">Type-2 serine--tRNA ligase</fullName>
        <ecNumber evidence="1">6.1.1.11</ecNumber>
    </recommendedName>
    <alternativeName>
        <fullName evidence="1">Seryl-tRNA synthetase</fullName>
        <shortName evidence="1">SerRS</shortName>
    </alternativeName>
    <alternativeName>
        <fullName evidence="1">Seryl-tRNA(Ser/Sec) synthetase</fullName>
    </alternativeName>
</protein>
<sequence>MRFKLDGRIIFSKDVEEETQKDIVEVLENRDIFLKGVPEGKENEASKIEGYEFDGKDLKLKMTSGTYTRAHEGIVRLKKPIMEKVGRKHQIGIRDVAIDRYVVTLTAEPSKVSELKGLKVPECEVELESEKINIVFENLGDGELKRNIIDRAIKFVKNELDKQDQDLTFEVCKIAPGTIVSDYKAKREITFDTDPTELAEPNGWVKRFPGRGQWFYTAPMAKLFRAFESLIIEECIDKIGFDECLFPKLIPLDVMYKMRYLEGLPEGMYYVCPPKREPEMFQDFVNEMMIKKEIPIEKLKTLLRDPAYVLAPAQCEPFYSFFDHELVDVDHPSKFFDKSGWTYRWEGGGAKGLDRVNEFLRGECVWMGTPEFVETVRDDTLKYAENLAEKLDLEYWTEVGDDPFYLEGRKKEDRGIEFPDVPKYEMRLWLPHIKEERKGVAVTSANIHGTHFIEGFGIKDYKERKVWTGCTGYGLTRWVIGFLAQYGYNYDDWPELIQKKVGKLPEIPKLITWP</sequence>
<dbReference type="EC" id="6.1.1.11" evidence="1"/>
<dbReference type="EMBL" id="CP000745">
    <property type="protein sequence ID" value="ABR65197.1"/>
    <property type="molecule type" value="Genomic_DNA"/>
</dbReference>
<dbReference type="SMR" id="A6VFH1"/>
<dbReference type="STRING" id="426368.MmarC7_0127"/>
<dbReference type="KEGG" id="mmz:MmarC7_0127"/>
<dbReference type="eggNOG" id="arCOG00403">
    <property type="taxonomic scope" value="Archaea"/>
</dbReference>
<dbReference type="HOGENOM" id="CLU_542524_0_0_2"/>
<dbReference type="OrthoDB" id="115981at2157"/>
<dbReference type="UniPathway" id="UPA00906">
    <property type="reaction ID" value="UER00895"/>
</dbReference>
<dbReference type="GO" id="GO:0005737">
    <property type="term" value="C:cytoplasm"/>
    <property type="evidence" value="ECO:0007669"/>
    <property type="project" value="UniProtKB-SubCell"/>
</dbReference>
<dbReference type="GO" id="GO:0005524">
    <property type="term" value="F:ATP binding"/>
    <property type="evidence" value="ECO:0007669"/>
    <property type="project" value="UniProtKB-UniRule"/>
</dbReference>
<dbReference type="GO" id="GO:0004828">
    <property type="term" value="F:serine-tRNA ligase activity"/>
    <property type="evidence" value="ECO:0007669"/>
    <property type="project" value="UniProtKB-UniRule"/>
</dbReference>
<dbReference type="GO" id="GO:0008270">
    <property type="term" value="F:zinc ion binding"/>
    <property type="evidence" value="ECO:0007669"/>
    <property type="project" value="UniProtKB-UniRule"/>
</dbReference>
<dbReference type="GO" id="GO:0016260">
    <property type="term" value="P:selenocysteine biosynthetic process"/>
    <property type="evidence" value="ECO:0007669"/>
    <property type="project" value="UniProtKB-UniRule"/>
</dbReference>
<dbReference type="GO" id="GO:0006434">
    <property type="term" value="P:seryl-tRNA aminoacylation"/>
    <property type="evidence" value="ECO:0007669"/>
    <property type="project" value="UniProtKB-UniRule"/>
</dbReference>
<dbReference type="CDD" id="cd00670">
    <property type="entry name" value="Gly_His_Pro_Ser_Thr_tRS_core"/>
    <property type="match status" value="1"/>
</dbReference>
<dbReference type="Gene3D" id="3.30.70.1920">
    <property type="match status" value="1"/>
</dbReference>
<dbReference type="Gene3D" id="3.30.930.10">
    <property type="entry name" value="Bira Bifunctional Protein, Domain 2"/>
    <property type="match status" value="1"/>
</dbReference>
<dbReference type="HAMAP" id="MF_01278">
    <property type="entry name" value="Ser_tRNA_synth_type2"/>
    <property type="match status" value="1"/>
</dbReference>
<dbReference type="InterPro" id="IPR002314">
    <property type="entry name" value="aa-tRNA-synt_IIb"/>
</dbReference>
<dbReference type="InterPro" id="IPR045864">
    <property type="entry name" value="aa-tRNA-synth_II/BPL/LPL"/>
</dbReference>
<dbReference type="InterPro" id="IPR004503">
    <property type="entry name" value="Ser-tRNA-ligase_2_arc"/>
</dbReference>
<dbReference type="InterPro" id="IPR041293">
    <property type="entry name" value="SerS_tRNA-bd"/>
</dbReference>
<dbReference type="NCBIfam" id="NF002120">
    <property type="entry name" value="PRK00960.1"/>
    <property type="match status" value="1"/>
</dbReference>
<dbReference type="NCBIfam" id="TIGR00415">
    <property type="entry name" value="serS_MJ"/>
    <property type="match status" value="1"/>
</dbReference>
<dbReference type="Pfam" id="PF00587">
    <property type="entry name" value="tRNA-synt_2b"/>
    <property type="match status" value="1"/>
</dbReference>
<dbReference type="Pfam" id="PF18490">
    <property type="entry name" value="tRNA_bind_4"/>
    <property type="match status" value="1"/>
</dbReference>
<dbReference type="SUPFAM" id="SSF55681">
    <property type="entry name" value="Class II aaRS and biotin synthetases"/>
    <property type="match status" value="1"/>
</dbReference>
<feature type="chain" id="PRO_1000165223" description="Type-2 serine--tRNA ligase">
    <location>
        <begin position="1"/>
        <end position="514"/>
    </location>
</feature>
<feature type="binding site" evidence="1">
    <location>
        <position position="313"/>
    </location>
    <ligand>
        <name>L-serine</name>
        <dbReference type="ChEBI" id="CHEBI:33384"/>
    </ligand>
</feature>
<feature type="binding site" evidence="1">
    <location>
        <position position="315"/>
    </location>
    <ligand>
        <name>Zn(2+)</name>
        <dbReference type="ChEBI" id="CHEBI:29105"/>
        <note>catalytic</note>
    </ligand>
</feature>
<feature type="binding site" evidence="1">
    <location>
        <begin position="344"/>
        <end position="346"/>
    </location>
    <ligand>
        <name>ATP</name>
        <dbReference type="ChEBI" id="CHEBI:30616"/>
    </ligand>
</feature>
<feature type="binding site" evidence="1">
    <location>
        <position position="344"/>
    </location>
    <ligand>
        <name>L-serine</name>
        <dbReference type="ChEBI" id="CHEBI:33384"/>
    </ligand>
</feature>
<feature type="binding site" evidence="1">
    <location>
        <begin position="355"/>
        <end position="356"/>
    </location>
    <ligand>
        <name>ATP</name>
        <dbReference type="ChEBI" id="CHEBI:30616"/>
    </ligand>
</feature>
<feature type="binding site" evidence="1">
    <location>
        <begin position="361"/>
        <end position="363"/>
    </location>
    <ligand>
        <name>L-serine</name>
        <dbReference type="ChEBI" id="CHEBI:33384"/>
    </ligand>
</feature>
<feature type="binding site" evidence="1">
    <location>
        <position position="363"/>
    </location>
    <ligand>
        <name>Zn(2+)</name>
        <dbReference type="ChEBI" id="CHEBI:29105"/>
        <note>catalytic</note>
    </ligand>
</feature>
<feature type="binding site" evidence="1">
    <location>
        <position position="470"/>
    </location>
    <ligand>
        <name>Zn(2+)</name>
        <dbReference type="ChEBI" id="CHEBI:29105"/>
        <note>catalytic</note>
    </ligand>
</feature>
<feature type="binding site" evidence="1">
    <location>
        <position position="477"/>
    </location>
    <ligand>
        <name>ATP</name>
        <dbReference type="ChEBI" id="CHEBI:30616"/>
    </ligand>
</feature>
<gene>
    <name evidence="1" type="primary">serS</name>
    <name type="ordered locus">MmarC7_0127</name>
</gene>
<reference key="1">
    <citation type="submission" date="2007-06" db="EMBL/GenBank/DDBJ databases">
        <title>Complete sequence of Methanococcus maripaludis C7.</title>
        <authorList>
            <consortium name="US DOE Joint Genome Institute"/>
            <person name="Copeland A."/>
            <person name="Lucas S."/>
            <person name="Lapidus A."/>
            <person name="Barry K."/>
            <person name="Glavina del Rio T."/>
            <person name="Dalin E."/>
            <person name="Tice H."/>
            <person name="Pitluck S."/>
            <person name="Clum A."/>
            <person name="Schmutz J."/>
            <person name="Larimer F."/>
            <person name="Land M."/>
            <person name="Hauser L."/>
            <person name="Kyrpides N."/>
            <person name="Anderson I."/>
            <person name="Sieprawska-Lupa M."/>
            <person name="Whitman W.B."/>
            <person name="Richardson P."/>
        </authorList>
    </citation>
    <scope>NUCLEOTIDE SEQUENCE [LARGE SCALE GENOMIC DNA]</scope>
    <source>
        <strain>C7 / ATCC BAA-1331</strain>
    </source>
</reference>
<keyword id="KW-0030">Aminoacyl-tRNA synthetase</keyword>
<keyword id="KW-0067">ATP-binding</keyword>
<keyword id="KW-0963">Cytoplasm</keyword>
<keyword id="KW-0436">Ligase</keyword>
<keyword id="KW-0479">Metal-binding</keyword>
<keyword id="KW-0547">Nucleotide-binding</keyword>
<keyword id="KW-0648">Protein biosynthesis</keyword>
<keyword id="KW-0862">Zinc</keyword>